<name>ATPE_LACP3</name>
<keyword id="KW-0066">ATP synthesis</keyword>
<keyword id="KW-1003">Cell membrane</keyword>
<keyword id="KW-0139">CF(1)</keyword>
<keyword id="KW-0375">Hydrogen ion transport</keyword>
<keyword id="KW-0406">Ion transport</keyword>
<keyword id="KW-0472">Membrane</keyword>
<keyword id="KW-1185">Reference proteome</keyword>
<keyword id="KW-0813">Transport</keyword>
<sequence length="143" mass="15776">MAETSNVLRVNIVTPDGLVYDHHARMLVVHSVAGELGIMANHEPIVTPLEIGEVDVQRVDASDHNDSIAVNGGFMEVSENVASIVADSAERERDIDLSRAQAARDRAQKRIAQAKNDHNQDDLRRAQVALRRAINRINVKTSH</sequence>
<gene>
    <name evidence="1" type="primary">atpC</name>
    <name type="ordered locus">LSEI_1167</name>
</gene>
<reference key="1">
    <citation type="journal article" date="2006" name="Proc. Natl. Acad. Sci. U.S.A.">
        <title>Comparative genomics of the lactic acid bacteria.</title>
        <authorList>
            <person name="Makarova K.S."/>
            <person name="Slesarev A."/>
            <person name="Wolf Y.I."/>
            <person name="Sorokin A."/>
            <person name="Mirkin B."/>
            <person name="Koonin E.V."/>
            <person name="Pavlov A."/>
            <person name="Pavlova N."/>
            <person name="Karamychev V."/>
            <person name="Polouchine N."/>
            <person name="Shakhova V."/>
            <person name="Grigoriev I."/>
            <person name="Lou Y."/>
            <person name="Rohksar D."/>
            <person name="Lucas S."/>
            <person name="Huang K."/>
            <person name="Goodstein D.M."/>
            <person name="Hawkins T."/>
            <person name="Plengvidhya V."/>
            <person name="Welker D."/>
            <person name="Hughes J."/>
            <person name="Goh Y."/>
            <person name="Benson A."/>
            <person name="Baldwin K."/>
            <person name="Lee J.-H."/>
            <person name="Diaz-Muniz I."/>
            <person name="Dosti B."/>
            <person name="Smeianov V."/>
            <person name="Wechter W."/>
            <person name="Barabote R."/>
            <person name="Lorca G."/>
            <person name="Altermann E."/>
            <person name="Barrangou R."/>
            <person name="Ganesan B."/>
            <person name="Xie Y."/>
            <person name="Rawsthorne H."/>
            <person name="Tamir D."/>
            <person name="Parker C."/>
            <person name="Breidt F."/>
            <person name="Broadbent J.R."/>
            <person name="Hutkins R."/>
            <person name="O'Sullivan D."/>
            <person name="Steele J."/>
            <person name="Unlu G."/>
            <person name="Saier M.H. Jr."/>
            <person name="Klaenhammer T."/>
            <person name="Richardson P."/>
            <person name="Kozyavkin S."/>
            <person name="Weimer B.C."/>
            <person name="Mills D.A."/>
        </authorList>
    </citation>
    <scope>NUCLEOTIDE SEQUENCE [LARGE SCALE GENOMIC DNA]</scope>
    <source>
        <strain>ATCC 334 / BCRC 17002 / CCUG 31169 / CIP 107868 / KCTC 3260 / NRRL B-441</strain>
    </source>
</reference>
<proteinExistence type="inferred from homology"/>
<comment type="function">
    <text evidence="1">Produces ATP from ADP in the presence of a proton gradient across the membrane.</text>
</comment>
<comment type="subunit">
    <text evidence="1">F-type ATPases have 2 components, CF(1) - the catalytic core - and CF(0) - the membrane proton channel. CF(1) has five subunits: alpha(3), beta(3), gamma(1), delta(1), epsilon(1). CF(0) has three main subunits: a, b and c.</text>
</comment>
<comment type="subcellular location">
    <subcellularLocation>
        <location evidence="1">Cell membrane</location>
        <topology evidence="1">Peripheral membrane protein</topology>
    </subcellularLocation>
</comment>
<comment type="similarity">
    <text evidence="1">Belongs to the ATPase epsilon chain family.</text>
</comment>
<accession>Q03A17</accession>
<feature type="chain" id="PRO_1000056494" description="ATP synthase epsilon chain">
    <location>
        <begin position="1"/>
        <end position="143"/>
    </location>
</feature>
<organism>
    <name type="scientific">Lacticaseibacillus paracasei (strain ATCC 334 / BCRC 17002 / CCUG 31169 / CIP 107868 / KCTC 3260 / NRRL B-441)</name>
    <name type="common">Lactobacillus paracasei</name>
    <dbReference type="NCBI Taxonomy" id="321967"/>
    <lineage>
        <taxon>Bacteria</taxon>
        <taxon>Bacillati</taxon>
        <taxon>Bacillota</taxon>
        <taxon>Bacilli</taxon>
        <taxon>Lactobacillales</taxon>
        <taxon>Lactobacillaceae</taxon>
        <taxon>Lacticaseibacillus</taxon>
    </lineage>
</organism>
<evidence type="ECO:0000255" key="1">
    <source>
        <dbReference type="HAMAP-Rule" id="MF_00530"/>
    </source>
</evidence>
<protein>
    <recommendedName>
        <fullName evidence="1">ATP synthase epsilon chain</fullName>
    </recommendedName>
    <alternativeName>
        <fullName evidence="1">ATP synthase F1 sector epsilon subunit</fullName>
    </alternativeName>
    <alternativeName>
        <fullName evidence="1">F-ATPase epsilon subunit</fullName>
    </alternativeName>
</protein>
<dbReference type="EMBL" id="CP000423">
    <property type="protein sequence ID" value="ABJ69955.1"/>
    <property type="molecule type" value="Genomic_DNA"/>
</dbReference>
<dbReference type="RefSeq" id="WP_003564973.1">
    <property type="nucleotide sequence ID" value="NC_008526.1"/>
</dbReference>
<dbReference type="RefSeq" id="YP_806397.1">
    <property type="nucleotide sequence ID" value="NC_008526.1"/>
</dbReference>
<dbReference type="SMR" id="Q03A17"/>
<dbReference type="STRING" id="321967.LSEI_1167"/>
<dbReference type="PaxDb" id="321967-LSEI_1167"/>
<dbReference type="KEGG" id="lca:LSEI_1167"/>
<dbReference type="PATRIC" id="fig|321967.11.peg.1141"/>
<dbReference type="HOGENOM" id="CLU_084338_1_0_9"/>
<dbReference type="Proteomes" id="UP000001651">
    <property type="component" value="Chromosome"/>
</dbReference>
<dbReference type="GO" id="GO:0005886">
    <property type="term" value="C:plasma membrane"/>
    <property type="evidence" value="ECO:0007669"/>
    <property type="project" value="UniProtKB-SubCell"/>
</dbReference>
<dbReference type="GO" id="GO:0045259">
    <property type="term" value="C:proton-transporting ATP synthase complex"/>
    <property type="evidence" value="ECO:0007669"/>
    <property type="project" value="UniProtKB-KW"/>
</dbReference>
<dbReference type="GO" id="GO:0005524">
    <property type="term" value="F:ATP binding"/>
    <property type="evidence" value="ECO:0007669"/>
    <property type="project" value="UniProtKB-UniRule"/>
</dbReference>
<dbReference type="GO" id="GO:0046933">
    <property type="term" value="F:proton-transporting ATP synthase activity, rotational mechanism"/>
    <property type="evidence" value="ECO:0007669"/>
    <property type="project" value="UniProtKB-UniRule"/>
</dbReference>
<dbReference type="CDD" id="cd12152">
    <property type="entry name" value="F1-ATPase_delta"/>
    <property type="match status" value="1"/>
</dbReference>
<dbReference type="Gene3D" id="1.20.5.440">
    <property type="entry name" value="ATP synthase delta/epsilon subunit, C-terminal domain"/>
    <property type="match status" value="1"/>
</dbReference>
<dbReference type="Gene3D" id="2.60.15.10">
    <property type="entry name" value="F0F1 ATP synthase delta/epsilon subunit, N-terminal"/>
    <property type="match status" value="1"/>
</dbReference>
<dbReference type="HAMAP" id="MF_00530">
    <property type="entry name" value="ATP_synth_epsil_bac"/>
    <property type="match status" value="1"/>
</dbReference>
<dbReference type="InterPro" id="IPR036794">
    <property type="entry name" value="ATP_F1_dsu/esu_C_sf"/>
</dbReference>
<dbReference type="InterPro" id="IPR001469">
    <property type="entry name" value="ATP_synth_F1_dsu/esu"/>
</dbReference>
<dbReference type="InterPro" id="IPR020546">
    <property type="entry name" value="ATP_synth_F1_dsu/esu_N"/>
</dbReference>
<dbReference type="InterPro" id="IPR020547">
    <property type="entry name" value="ATP_synth_F1_esu_C"/>
</dbReference>
<dbReference type="InterPro" id="IPR036771">
    <property type="entry name" value="ATPsynth_dsu/esu_N"/>
</dbReference>
<dbReference type="NCBIfam" id="TIGR01216">
    <property type="entry name" value="ATP_synt_epsi"/>
    <property type="match status" value="1"/>
</dbReference>
<dbReference type="NCBIfam" id="NF001846">
    <property type="entry name" value="PRK00571.1-3"/>
    <property type="match status" value="1"/>
</dbReference>
<dbReference type="PANTHER" id="PTHR13822">
    <property type="entry name" value="ATP SYNTHASE DELTA/EPSILON CHAIN"/>
    <property type="match status" value="1"/>
</dbReference>
<dbReference type="PANTHER" id="PTHR13822:SF10">
    <property type="entry name" value="ATP SYNTHASE EPSILON CHAIN, CHLOROPLASTIC"/>
    <property type="match status" value="1"/>
</dbReference>
<dbReference type="Pfam" id="PF00401">
    <property type="entry name" value="ATP-synt_DE"/>
    <property type="match status" value="1"/>
</dbReference>
<dbReference type="Pfam" id="PF02823">
    <property type="entry name" value="ATP-synt_DE_N"/>
    <property type="match status" value="1"/>
</dbReference>
<dbReference type="SUPFAM" id="SSF46604">
    <property type="entry name" value="Epsilon subunit of F1F0-ATP synthase C-terminal domain"/>
    <property type="match status" value="1"/>
</dbReference>
<dbReference type="SUPFAM" id="SSF51344">
    <property type="entry name" value="Epsilon subunit of F1F0-ATP synthase N-terminal domain"/>
    <property type="match status" value="1"/>
</dbReference>